<feature type="chain" id="PRO_0000124919" description="Large ribosomal subunit protein uL5">
    <location>
        <begin position="1"/>
        <end position="187"/>
    </location>
</feature>
<dbReference type="EMBL" id="BX248355">
    <property type="protein sequence ID" value="CAE48999.1"/>
    <property type="molecule type" value="Genomic_DNA"/>
</dbReference>
<dbReference type="RefSeq" id="WP_004566766.1">
    <property type="nucleotide sequence ID" value="NC_002935.2"/>
</dbReference>
<dbReference type="SMR" id="Q6NJC1"/>
<dbReference type="STRING" id="257309.DIP0488"/>
<dbReference type="GeneID" id="97331091"/>
<dbReference type="KEGG" id="cdi:DIP0488"/>
<dbReference type="HOGENOM" id="CLU_061015_2_1_11"/>
<dbReference type="Proteomes" id="UP000002198">
    <property type="component" value="Chromosome"/>
</dbReference>
<dbReference type="GO" id="GO:1990904">
    <property type="term" value="C:ribonucleoprotein complex"/>
    <property type="evidence" value="ECO:0007669"/>
    <property type="project" value="UniProtKB-KW"/>
</dbReference>
<dbReference type="GO" id="GO:0005840">
    <property type="term" value="C:ribosome"/>
    <property type="evidence" value="ECO:0007669"/>
    <property type="project" value="UniProtKB-KW"/>
</dbReference>
<dbReference type="GO" id="GO:0019843">
    <property type="term" value="F:rRNA binding"/>
    <property type="evidence" value="ECO:0007669"/>
    <property type="project" value="UniProtKB-UniRule"/>
</dbReference>
<dbReference type="GO" id="GO:0003735">
    <property type="term" value="F:structural constituent of ribosome"/>
    <property type="evidence" value="ECO:0007669"/>
    <property type="project" value="InterPro"/>
</dbReference>
<dbReference type="GO" id="GO:0000049">
    <property type="term" value="F:tRNA binding"/>
    <property type="evidence" value="ECO:0007669"/>
    <property type="project" value="UniProtKB-UniRule"/>
</dbReference>
<dbReference type="GO" id="GO:0006412">
    <property type="term" value="P:translation"/>
    <property type="evidence" value="ECO:0007669"/>
    <property type="project" value="UniProtKB-UniRule"/>
</dbReference>
<dbReference type="FunFam" id="3.30.1440.10:FF:000001">
    <property type="entry name" value="50S ribosomal protein L5"/>
    <property type="match status" value="1"/>
</dbReference>
<dbReference type="Gene3D" id="3.30.1440.10">
    <property type="match status" value="1"/>
</dbReference>
<dbReference type="HAMAP" id="MF_01333_B">
    <property type="entry name" value="Ribosomal_uL5_B"/>
    <property type="match status" value="1"/>
</dbReference>
<dbReference type="InterPro" id="IPR002132">
    <property type="entry name" value="Ribosomal_uL5"/>
</dbReference>
<dbReference type="InterPro" id="IPR020930">
    <property type="entry name" value="Ribosomal_uL5_bac-type"/>
</dbReference>
<dbReference type="InterPro" id="IPR031309">
    <property type="entry name" value="Ribosomal_uL5_C"/>
</dbReference>
<dbReference type="InterPro" id="IPR022803">
    <property type="entry name" value="Ribosomal_uL5_dom_sf"/>
</dbReference>
<dbReference type="InterPro" id="IPR031310">
    <property type="entry name" value="Ribosomal_uL5_N"/>
</dbReference>
<dbReference type="NCBIfam" id="NF000585">
    <property type="entry name" value="PRK00010.1"/>
    <property type="match status" value="1"/>
</dbReference>
<dbReference type="PANTHER" id="PTHR11994">
    <property type="entry name" value="60S RIBOSOMAL PROTEIN L11-RELATED"/>
    <property type="match status" value="1"/>
</dbReference>
<dbReference type="Pfam" id="PF00281">
    <property type="entry name" value="Ribosomal_L5"/>
    <property type="match status" value="1"/>
</dbReference>
<dbReference type="Pfam" id="PF00673">
    <property type="entry name" value="Ribosomal_L5_C"/>
    <property type="match status" value="1"/>
</dbReference>
<dbReference type="PIRSF" id="PIRSF002161">
    <property type="entry name" value="Ribosomal_L5"/>
    <property type="match status" value="1"/>
</dbReference>
<dbReference type="SUPFAM" id="SSF55282">
    <property type="entry name" value="RL5-like"/>
    <property type="match status" value="1"/>
</dbReference>
<name>RL5_CORDI</name>
<protein>
    <recommendedName>
        <fullName evidence="1">Large ribosomal subunit protein uL5</fullName>
    </recommendedName>
    <alternativeName>
        <fullName evidence="2">50S ribosomal protein L5</fullName>
    </alternativeName>
</protein>
<organism>
    <name type="scientific">Corynebacterium diphtheriae (strain ATCC 700971 / NCTC 13129 / Biotype gravis)</name>
    <dbReference type="NCBI Taxonomy" id="257309"/>
    <lineage>
        <taxon>Bacteria</taxon>
        <taxon>Bacillati</taxon>
        <taxon>Actinomycetota</taxon>
        <taxon>Actinomycetes</taxon>
        <taxon>Mycobacteriales</taxon>
        <taxon>Corynebacteriaceae</taxon>
        <taxon>Corynebacterium</taxon>
    </lineage>
</organism>
<evidence type="ECO:0000255" key="1">
    <source>
        <dbReference type="HAMAP-Rule" id="MF_01333"/>
    </source>
</evidence>
<evidence type="ECO:0000305" key="2"/>
<accession>Q6NJC1</accession>
<comment type="function">
    <text evidence="1">This is one of the proteins that bind and probably mediate the attachment of the 5S RNA into the large ribosomal subunit, where it forms part of the central protuberance. In the 70S ribosome it contacts protein S13 of the 30S subunit (bridge B1b), connecting the 2 subunits; this bridge is implicated in subunit movement. Contacts the P site tRNA; the 5S rRNA and some of its associated proteins might help stabilize positioning of ribosome-bound tRNAs.</text>
</comment>
<comment type="subunit">
    <text evidence="1">Part of the 50S ribosomal subunit; part of the 5S rRNA/L5/L18/L25 subcomplex. Contacts the 5S rRNA and the P site tRNA. Forms a bridge to the 30S subunit in the 70S ribosome.</text>
</comment>
<comment type="similarity">
    <text evidence="1">Belongs to the universal ribosomal protein uL5 family.</text>
</comment>
<proteinExistence type="inferred from homology"/>
<keyword id="KW-1185">Reference proteome</keyword>
<keyword id="KW-0687">Ribonucleoprotein</keyword>
<keyword id="KW-0689">Ribosomal protein</keyword>
<keyword id="KW-0694">RNA-binding</keyword>
<keyword id="KW-0699">rRNA-binding</keyword>
<keyword id="KW-0820">tRNA-binding</keyword>
<sequence>MSENYTPRLKTRYREEIRTKLNDEFSYENVMQIPGVVKVVVNMGVGDAARDSKLINGALEDLTLITGQKPELRRAKKSIANFKLREGMPIGARVTLRGDRMWEFLDRLLTVALPRIRDFRGLSDQQFDGHGNYTFGLSEQTMFYEIDVDKIDRPRGMDITVVTTATNNEEGRALLRELGFPFKKADA</sequence>
<reference key="1">
    <citation type="journal article" date="2003" name="Nucleic Acids Res.">
        <title>The complete genome sequence and analysis of Corynebacterium diphtheriae NCTC13129.</title>
        <authorList>
            <person name="Cerdeno-Tarraga A.-M."/>
            <person name="Efstratiou A."/>
            <person name="Dover L.G."/>
            <person name="Holden M.T.G."/>
            <person name="Pallen M.J."/>
            <person name="Bentley S.D."/>
            <person name="Besra G.S."/>
            <person name="Churcher C.M."/>
            <person name="James K.D."/>
            <person name="De Zoysa A."/>
            <person name="Chillingworth T."/>
            <person name="Cronin A."/>
            <person name="Dowd L."/>
            <person name="Feltwell T."/>
            <person name="Hamlin N."/>
            <person name="Holroyd S."/>
            <person name="Jagels K."/>
            <person name="Moule S."/>
            <person name="Quail M.A."/>
            <person name="Rabbinowitsch E."/>
            <person name="Rutherford K.M."/>
            <person name="Thomson N.R."/>
            <person name="Unwin L."/>
            <person name="Whitehead S."/>
            <person name="Barrell B.G."/>
            <person name="Parkhill J."/>
        </authorList>
    </citation>
    <scope>NUCLEOTIDE SEQUENCE [LARGE SCALE GENOMIC DNA]</scope>
    <source>
        <strain>ATCC 700971 / NCTC 13129 / Biotype gravis</strain>
    </source>
</reference>
<gene>
    <name evidence="1" type="primary">rplE</name>
    <name type="ordered locus">DIP0488</name>
</gene>